<comment type="function">
    <text evidence="1">Part of the energy-coupling factor (ECF) transporter complex CbiMNOQ involved in cobalt import.</text>
</comment>
<comment type="pathway">
    <text evidence="1">Cofactor biosynthesis; adenosylcobalamin biosynthesis.</text>
</comment>
<comment type="subunit">
    <text evidence="1">Forms an energy-coupling factor (ECF) transporter complex composed of an ATP-binding protein (A component, CbiO), a transmembrane protein (T component, CbiQ) and 2 possible substrate-capture proteins (S components, CbiM and CbiN) of unknown stoichimetry.</text>
</comment>
<comment type="subcellular location">
    <subcellularLocation>
        <location evidence="1">Cell inner membrane</location>
        <topology evidence="1">Multi-pass membrane protein</topology>
    </subcellularLocation>
</comment>
<comment type="similarity">
    <text evidence="1">Belongs to the CbiM family.</text>
</comment>
<sequence>MLRRVLASKRASLILMGMLSFYIIVSASAPAYAMHIMEGYLPAGWAAFWWLVALPFMLLGVRSLTRITKANPELKLLLALAGAFTFVLSALKLPSVTGSCSHPTGTGLGSVLFGPLAMSVLGSLVLLFQALLLAHGGLTTLGANAFSMAIAGPFAAYWIYHLTIKLTGKQRIAIFLAATLADLLTYIITSVQLALAFPAPVGGFIASFAKFAGIFAITQIPLAISEGLLTVLVWNWLQSYSPQELQLLKLIQGESQSHESI</sequence>
<reference key="1">
    <citation type="journal article" date="2001" name="DNA Res.">
        <title>Complete genomic sequence of the filamentous nitrogen-fixing cyanobacterium Anabaena sp. strain PCC 7120.</title>
        <authorList>
            <person name="Kaneko T."/>
            <person name="Nakamura Y."/>
            <person name="Wolk C.P."/>
            <person name="Kuritz T."/>
            <person name="Sasamoto S."/>
            <person name="Watanabe A."/>
            <person name="Iriguchi M."/>
            <person name="Ishikawa A."/>
            <person name="Kawashima K."/>
            <person name="Kimura T."/>
            <person name="Kishida Y."/>
            <person name="Kohara M."/>
            <person name="Matsumoto M."/>
            <person name="Matsuno A."/>
            <person name="Muraki A."/>
            <person name="Nakazaki N."/>
            <person name="Shimpo S."/>
            <person name="Sugimoto M."/>
            <person name="Takazawa M."/>
            <person name="Yamada M."/>
            <person name="Yasuda M."/>
            <person name="Tabata S."/>
        </authorList>
    </citation>
    <scope>NUCLEOTIDE SEQUENCE [LARGE SCALE GENOMIC DNA]</scope>
    <source>
        <strain>PCC 7120 / SAG 25.82 / UTEX 2576</strain>
    </source>
</reference>
<feature type="signal peptide" evidence="1">
    <location>
        <begin position="1"/>
        <end position="33"/>
    </location>
</feature>
<feature type="chain" id="PRO_0000411143" description="Cobalt transport protein CbiM">
    <location>
        <begin position="34"/>
        <end position="261"/>
    </location>
</feature>
<feature type="transmembrane region" description="Helical" evidence="1">
    <location>
        <begin position="41"/>
        <end position="61"/>
    </location>
</feature>
<feature type="transmembrane region" description="Helical" evidence="1">
    <location>
        <begin position="76"/>
        <end position="96"/>
    </location>
</feature>
<feature type="transmembrane region" description="Helical" evidence="1">
    <location>
        <begin position="108"/>
        <end position="128"/>
    </location>
</feature>
<feature type="transmembrane region" description="Helical" evidence="1">
    <location>
        <begin position="140"/>
        <end position="160"/>
    </location>
</feature>
<feature type="transmembrane region" description="Helical" evidence="1">
    <location>
        <begin position="172"/>
        <end position="192"/>
    </location>
</feature>
<feature type="transmembrane region" description="Helical" evidence="1">
    <location>
        <begin position="197"/>
        <end position="217"/>
    </location>
</feature>
<feature type="transmembrane region" description="Helical" evidence="1">
    <location>
        <begin position="220"/>
        <end position="240"/>
    </location>
</feature>
<organism>
    <name type="scientific">Nostoc sp. (strain PCC 7120 / SAG 25.82 / UTEX 2576)</name>
    <dbReference type="NCBI Taxonomy" id="103690"/>
    <lineage>
        <taxon>Bacteria</taxon>
        <taxon>Bacillati</taxon>
        <taxon>Cyanobacteriota</taxon>
        <taxon>Cyanophyceae</taxon>
        <taxon>Nostocales</taxon>
        <taxon>Nostocaceae</taxon>
        <taxon>Nostoc</taxon>
    </lineage>
</organism>
<keyword id="KW-0997">Cell inner membrane</keyword>
<keyword id="KW-1003">Cell membrane</keyword>
<keyword id="KW-0169">Cobalamin biosynthesis</keyword>
<keyword id="KW-0170">Cobalt</keyword>
<keyword id="KW-0171">Cobalt transport</keyword>
<keyword id="KW-0406">Ion transport</keyword>
<keyword id="KW-0472">Membrane</keyword>
<keyword id="KW-1185">Reference proteome</keyword>
<keyword id="KW-0732">Signal</keyword>
<keyword id="KW-0812">Transmembrane</keyword>
<keyword id="KW-1133">Transmembrane helix</keyword>
<keyword id="KW-0813">Transport</keyword>
<gene>
    <name evidence="1" type="primary">cbiM</name>
    <name type="ordered locus">alr3943</name>
</gene>
<dbReference type="EMBL" id="BA000019">
    <property type="protein sequence ID" value="BAB75642.1"/>
    <property type="molecule type" value="Genomic_DNA"/>
</dbReference>
<dbReference type="PIR" id="AH2298">
    <property type="entry name" value="AH2298"/>
</dbReference>
<dbReference type="SMR" id="Q8YQ91"/>
<dbReference type="STRING" id="103690.gene:10495985"/>
<dbReference type="KEGG" id="ana:alr3943"/>
<dbReference type="eggNOG" id="COG0310">
    <property type="taxonomic scope" value="Bacteria"/>
</dbReference>
<dbReference type="UniPathway" id="UPA00148"/>
<dbReference type="Proteomes" id="UP000002483">
    <property type="component" value="Chromosome"/>
</dbReference>
<dbReference type="GO" id="GO:0043190">
    <property type="term" value="C:ATP-binding cassette (ABC) transporter complex"/>
    <property type="evidence" value="ECO:0007669"/>
    <property type="project" value="InterPro"/>
</dbReference>
<dbReference type="GO" id="GO:0015087">
    <property type="term" value="F:cobalt ion transmembrane transporter activity"/>
    <property type="evidence" value="ECO:0007669"/>
    <property type="project" value="UniProtKB-UniRule"/>
</dbReference>
<dbReference type="GO" id="GO:0009236">
    <property type="term" value="P:cobalamin biosynthetic process"/>
    <property type="evidence" value="ECO:0007669"/>
    <property type="project" value="UniProtKB-UniRule"/>
</dbReference>
<dbReference type="FunFam" id="1.10.1760.20:FF:000001">
    <property type="entry name" value="Cobalt transport protein CbiM"/>
    <property type="match status" value="1"/>
</dbReference>
<dbReference type="Gene3D" id="1.10.1760.20">
    <property type="match status" value="1"/>
</dbReference>
<dbReference type="HAMAP" id="MF_01462">
    <property type="entry name" value="CbiM"/>
    <property type="match status" value="1"/>
</dbReference>
<dbReference type="InterPro" id="IPR018024">
    <property type="entry name" value="CbiM"/>
</dbReference>
<dbReference type="InterPro" id="IPR002751">
    <property type="entry name" value="CbiM/NikMN"/>
</dbReference>
<dbReference type="NCBIfam" id="TIGR00123">
    <property type="entry name" value="cbiM"/>
    <property type="match status" value="1"/>
</dbReference>
<dbReference type="NCBIfam" id="NF006184">
    <property type="entry name" value="PRK08319.1"/>
    <property type="match status" value="1"/>
</dbReference>
<dbReference type="PANTHER" id="PTHR43627">
    <property type="match status" value="1"/>
</dbReference>
<dbReference type="PANTHER" id="PTHR43627:SF1">
    <property type="entry name" value="COBALT TRANSPORT PROTEIN CBIM"/>
    <property type="match status" value="1"/>
</dbReference>
<dbReference type="Pfam" id="PF01891">
    <property type="entry name" value="CbiM"/>
    <property type="match status" value="1"/>
</dbReference>
<protein>
    <recommendedName>
        <fullName evidence="1">Cobalt transport protein CbiM</fullName>
    </recommendedName>
    <alternativeName>
        <fullName evidence="1">Energy-coupling factor transporter probable substrate-capture protein CbiM</fullName>
        <shortName evidence="1">ECF transporter S component CbiM</shortName>
    </alternativeName>
</protein>
<evidence type="ECO:0000255" key="1">
    <source>
        <dbReference type="HAMAP-Rule" id="MF_01462"/>
    </source>
</evidence>
<accession>Q8YQ91</accession>
<name>CBIM_NOSS1</name>
<proteinExistence type="inferred from homology"/>